<keyword id="KW-1003">Cell membrane</keyword>
<keyword id="KW-0325">Glycoprotein</keyword>
<keyword id="KW-0336">GPI-anchor</keyword>
<keyword id="KW-0449">Lipoprotein</keyword>
<keyword id="KW-0472">Membrane</keyword>
<keyword id="KW-0732">Signal</keyword>
<keyword id="KW-0821">Trypanosomiasis</keyword>
<feature type="signal peptide">
    <location>
        <begin position="1"/>
        <end position="21"/>
    </location>
</feature>
<feature type="chain" id="PRO_0000036425" description="Variant surface glycoprotein ILTAT 1.25">
    <location>
        <begin position="22"/>
        <end position="484"/>
    </location>
</feature>
<feature type="propeptide" id="PRO_0000036426" description="Removed in mature form" evidence="1">
    <location>
        <begin position="485"/>
        <end position="507"/>
    </location>
</feature>
<feature type="region of interest" description="Disordered" evidence="3">
    <location>
        <begin position="83"/>
        <end position="102"/>
    </location>
</feature>
<feature type="region of interest" description="Disordered" evidence="3">
    <location>
        <begin position="384"/>
        <end position="474"/>
    </location>
</feature>
<feature type="compositionally biased region" description="Basic and acidic residues" evidence="3">
    <location>
        <begin position="83"/>
        <end position="95"/>
    </location>
</feature>
<feature type="compositionally biased region" description="Low complexity" evidence="3">
    <location>
        <begin position="384"/>
        <end position="395"/>
    </location>
</feature>
<feature type="compositionally biased region" description="Basic and acidic residues" evidence="3">
    <location>
        <begin position="396"/>
        <end position="420"/>
    </location>
</feature>
<feature type="compositionally biased region" description="Low complexity" evidence="3">
    <location>
        <begin position="444"/>
        <end position="455"/>
    </location>
</feature>
<feature type="compositionally biased region" description="Basic and acidic residues" evidence="3">
    <location>
        <begin position="456"/>
        <end position="474"/>
    </location>
</feature>
<feature type="lipid moiety-binding region" description="GPI-anchor amidated aspartate" evidence="1">
    <location>
        <position position="484"/>
    </location>
</feature>
<feature type="glycosylation site" description="N-linked (GlcNAc...) asparagine" evidence="2">
    <location>
        <position position="141"/>
    </location>
</feature>
<feature type="glycosylation site" description="N-linked (GlcNAc...) asparagine" evidence="2">
    <location>
        <position position="371"/>
    </location>
</feature>
<reference key="1">
    <citation type="journal article" date="1991" name="J. Mol. Biol.">
        <title>Variant specific glycoprotein of Trypanosoma brucei consists of two domains each having an independently conserved pattern of cysteine residues.</title>
        <authorList>
            <person name="Carrington M."/>
            <person name="Miller N."/>
            <person name="Blum M.L."/>
            <person name="Roditi I."/>
            <person name="Wiley D.C."/>
            <person name="Turner M.J."/>
        </authorList>
    </citation>
    <scope>NUCLEOTIDE SEQUENCE [MRNA]</scope>
    <source>
        <strain>Isolate MIAG 211</strain>
    </source>
</reference>
<sequence length="507" mass="53044">MQSQQQPVFISIILLAINTDAAAPTTAVNAREFGLLCTLVRAEDNLEDRRSAGQAAKEVVALAAKIELILANLKHIERLAAAEPEAAPKESRSDETPEACKASKATVCSQAAQTYKTIRPDEKLALAFLAETTGDLRSTFNVTLKQITAAAASHARYFGENTESRPALDKIKKALYGSPEAKGDAIIESGDGTRSAACGNTDGNAANSAAKRATAALICLCGGDNTNTGNDACFTQTTADINYAKKGGEVERAWTEIRQKCKAGAAANKVTAAQLKAAAAELAALIHQKRGEKAVAGLLGAAQINNGAVDCDGSEANGKGSCVILSTSASKYKVETPDWLNALEAAIADLEQEQIELDNGRKAEAQILALNSSXTTLLAQAVEPTKQPPAKAAAAPEKKSNPQKDCNKNTKKRDCKEGDGCKWSSTEATEGAFCKPKDGEGQTSAAGAGDAGASDTEAKKCSDKKKEEECKSPNCKWDGKECKDSSILANKQFALSVASAAFVALLF</sequence>
<organism>
    <name type="scientific">Trypanosoma brucei brucei</name>
    <dbReference type="NCBI Taxonomy" id="5702"/>
    <lineage>
        <taxon>Eukaryota</taxon>
        <taxon>Discoba</taxon>
        <taxon>Euglenozoa</taxon>
        <taxon>Kinetoplastea</taxon>
        <taxon>Metakinetoplastina</taxon>
        <taxon>Trypanosomatida</taxon>
        <taxon>Trypanosomatidae</taxon>
        <taxon>Trypanosoma</taxon>
    </lineage>
</organism>
<name>VSI5_TRYBB</name>
<evidence type="ECO:0000250" key="1"/>
<evidence type="ECO:0000255" key="2"/>
<evidence type="ECO:0000256" key="3">
    <source>
        <dbReference type="SAM" id="MobiDB-lite"/>
    </source>
</evidence>
<proteinExistence type="evidence at transcript level"/>
<comment type="function">
    <text>VSG forms a coat on the surface of the parasite. The trypanosome evades the immune response of the host by expressing a series of antigenically distinct VSGs from an estimated 1000 VSG genes.</text>
</comment>
<comment type="subcellular location">
    <subcellularLocation>
        <location>Cell membrane</location>
        <topology>Lipid-anchor</topology>
        <topology>GPI-anchor</topology>
    </subcellularLocation>
    <text evidence="1">A soluble form is released from ruptured cells by the action of a PI-PLC.</text>
</comment>
<protein>
    <recommendedName>
        <fullName>Variant surface glycoprotein ILTAT 1.25</fullName>
        <shortName>VSG</shortName>
    </recommendedName>
</protein>
<accession>P26330</accession>
<dbReference type="EMBL" id="X56769">
    <property type="protein sequence ID" value="CAA40088.1"/>
    <property type="molecule type" value="mRNA"/>
</dbReference>
<dbReference type="PIR" id="S18450">
    <property type="entry name" value="S18450"/>
</dbReference>
<dbReference type="GO" id="GO:0005886">
    <property type="term" value="C:plasma membrane"/>
    <property type="evidence" value="ECO:0007669"/>
    <property type="project" value="UniProtKB-SubCell"/>
</dbReference>
<dbReference type="GO" id="GO:0098552">
    <property type="term" value="C:side of membrane"/>
    <property type="evidence" value="ECO:0007669"/>
    <property type="project" value="UniProtKB-KW"/>
</dbReference>
<dbReference type="Gene3D" id="3.30.1680.40">
    <property type="match status" value="1"/>
</dbReference>
<dbReference type="InterPro" id="IPR025932">
    <property type="entry name" value="Trypano_VSG_B_N_dom"/>
</dbReference>
<dbReference type="InterPro" id="IPR019609">
    <property type="entry name" value="Variant_surf_glycoprt_trypan_C"/>
</dbReference>
<dbReference type="Pfam" id="PF10659">
    <property type="entry name" value="Trypan_glycop_C"/>
    <property type="match status" value="1"/>
</dbReference>
<dbReference type="Pfam" id="PF13206">
    <property type="entry name" value="VSG_B"/>
    <property type="match status" value="1"/>
</dbReference>